<comment type="function">
    <text evidence="1">Fluoride-specific ion channel. Important for reducing fluoride concentration in the cell, thus reducing its toxicity.</text>
</comment>
<comment type="catalytic activity">
    <reaction evidence="1">
        <text>fluoride(in) = fluoride(out)</text>
        <dbReference type="Rhea" id="RHEA:76159"/>
        <dbReference type="ChEBI" id="CHEBI:17051"/>
    </reaction>
    <physiologicalReaction direction="left-to-right" evidence="1">
        <dbReference type="Rhea" id="RHEA:76160"/>
    </physiologicalReaction>
</comment>
<comment type="activity regulation">
    <text evidence="1">Na(+) is not transported, but it plays an essential structural role and its presence is essential for fluoride channel function.</text>
</comment>
<comment type="subcellular location">
    <subcellularLocation>
        <location evidence="1">Cell inner membrane</location>
        <topology evidence="1">Multi-pass membrane protein</topology>
    </subcellularLocation>
</comment>
<comment type="similarity">
    <text evidence="1">Belongs to the fluoride channel Fluc/FEX (TC 1.A.43) family.</text>
</comment>
<reference key="1">
    <citation type="journal article" date="2005" name="Nucleic Acids Res.">
        <title>The genome sequence of Xanthomonas oryzae pathovar oryzae KACC10331, the bacterial blight pathogen of rice.</title>
        <authorList>
            <person name="Lee B.-M."/>
            <person name="Park Y.-J."/>
            <person name="Park D.-S."/>
            <person name="Kang H.-W."/>
            <person name="Kim J.-G."/>
            <person name="Song E.-S."/>
            <person name="Park I.-C."/>
            <person name="Yoon U.-H."/>
            <person name="Hahn J.-H."/>
            <person name="Koo B.-S."/>
            <person name="Lee G.-B."/>
            <person name="Kim H."/>
            <person name="Park H.-S."/>
            <person name="Yoon K.-O."/>
            <person name="Kim J.-H."/>
            <person name="Jung C.-H."/>
            <person name="Koh N.-H."/>
            <person name="Seo J.-S."/>
            <person name="Go S.-J."/>
        </authorList>
    </citation>
    <scope>NUCLEOTIDE SEQUENCE [LARGE SCALE GENOMIC DNA]</scope>
    <source>
        <strain>KACC10331 / KXO85</strain>
    </source>
</reference>
<proteinExistence type="inferred from homology"/>
<name>FLUC_XANOR</name>
<feature type="chain" id="PRO_0000110212" description="Fluoride-specific ion channel FluC">
    <location>
        <begin position="1"/>
        <end position="167"/>
    </location>
</feature>
<feature type="transmembrane region" description="Helical" evidence="1">
    <location>
        <begin position="32"/>
        <end position="52"/>
    </location>
</feature>
<feature type="transmembrane region" description="Helical" evidence="1">
    <location>
        <begin position="69"/>
        <end position="89"/>
    </location>
</feature>
<feature type="transmembrane region" description="Helical" evidence="1">
    <location>
        <begin position="102"/>
        <end position="122"/>
    </location>
</feature>
<feature type="transmembrane region" description="Helical" evidence="1">
    <location>
        <begin position="137"/>
        <end position="157"/>
    </location>
</feature>
<feature type="binding site" evidence="1">
    <location>
        <position position="109"/>
    </location>
    <ligand>
        <name>Na(+)</name>
        <dbReference type="ChEBI" id="CHEBI:29101"/>
        <note>structural</note>
    </ligand>
</feature>
<feature type="binding site" evidence="1">
    <location>
        <position position="112"/>
    </location>
    <ligand>
        <name>Na(+)</name>
        <dbReference type="ChEBI" id="CHEBI:29101"/>
        <note>structural</note>
    </ligand>
</feature>
<evidence type="ECO:0000255" key="1">
    <source>
        <dbReference type="HAMAP-Rule" id="MF_00454"/>
    </source>
</evidence>
<gene>
    <name evidence="1" type="primary">fluC</name>
    <name evidence="1" type="synonym">crcB</name>
    <name type="ordered locus">XOO2540</name>
</gene>
<organism>
    <name type="scientific">Xanthomonas oryzae pv. oryzae (strain KACC10331 / KXO85)</name>
    <dbReference type="NCBI Taxonomy" id="291331"/>
    <lineage>
        <taxon>Bacteria</taxon>
        <taxon>Pseudomonadati</taxon>
        <taxon>Pseudomonadota</taxon>
        <taxon>Gammaproteobacteria</taxon>
        <taxon>Lysobacterales</taxon>
        <taxon>Lysobacteraceae</taxon>
        <taxon>Xanthomonas</taxon>
    </lineage>
</organism>
<accession>Q5GZS7</accession>
<keyword id="KW-0997">Cell inner membrane</keyword>
<keyword id="KW-1003">Cell membrane</keyword>
<keyword id="KW-0407">Ion channel</keyword>
<keyword id="KW-0406">Ion transport</keyword>
<keyword id="KW-0472">Membrane</keyword>
<keyword id="KW-0479">Metal-binding</keyword>
<keyword id="KW-1185">Reference proteome</keyword>
<keyword id="KW-0915">Sodium</keyword>
<keyword id="KW-0812">Transmembrane</keyword>
<keyword id="KW-1133">Transmembrane helix</keyword>
<keyword id="KW-0813">Transport</keyword>
<sequence length="167" mass="17294">MRIATSYEMCAQCCCAAAKFADTLQTKPRRSHVTPIYTIAAISLGASLGALARYGLGLALNAIFPPLPIGTLAANLIAAYVVGVTIAYVGTVPGLSPLWRLFMITGLAGGLSTFSTFTAELFSLLREGRLGMSAGMLGLHVGGSLALLMLGMLTIGLLRKSSLGIAE</sequence>
<protein>
    <recommendedName>
        <fullName evidence="1">Fluoride-specific ion channel FluC</fullName>
    </recommendedName>
</protein>
<dbReference type="EMBL" id="AE013598">
    <property type="protein sequence ID" value="AAW75794.1"/>
    <property type="molecule type" value="Genomic_DNA"/>
</dbReference>
<dbReference type="SMR" id="Q5GZS7"/>
<dbReference type="STRING" id="291331.XOO2540"/>
<dbReference type="KEGG" id="xoo:XOO2540"/>
<dbReference type="HOGENOM" id="CLU_114342_3_3_6"/>
<dbReference type="Proteomes" id="UP000006735">
    <property type="component" value="Chromosome"/>
</dbReference>
<dbReference type="GO" id="GO:0005886">
    <property type="term" value="C:plasma membrane"/>
    <property type="evidence" value="ECO:0007669"/>
    <property type="project" value="UniProtKB-SubCell"/>
</dbReference>
<dbReference type="GO" id="GO:0062054">
    <property type="term" value="F:fluoride channel activity"/>
    <property type="evidence" value="ECO:0007669"/>
    <property type="project" value="UniProtKB-UniRule"/>
</dbReference>
<dbReference type="GO" id="GO:0046872">
    <property type="term" value="F:metal ion binding"/>
    <property type="evidence" value="ECO:0007669"/>
    <property type="project" value="UniProtKB-KW"/>
</dbReference>
<dbReference type="GO" id="GO:0140114">
    <property type="term" value="P:cellular detoxification of fluoride"/>
    <property type="evidence" value="ECO:0007669"/>
    <property type="project" value="UniProtKB-UniRule"/>
</dbReference>
<dbReference type="HAMAP" id="MF_00454">
    <property type="entry name" value="FluC"/>
    <property type="match status" value="1"/>
</dbReference>
<dbReference type="InterPro" id="IPR003691">
    <property type="entry name" value="FluC"/>
</dbReference>
<dbReference type="NCBIfam" id="NF010792">
    <property type="entry name" value="PRK14196.1"/>
    <property type="match status" value="1"/>
</dbReference>
<dbReference type="PANTHER" id="PTHR28259">
    <property type="entry name" value="FLUORIDE EXPORT PROTEIN 1-RELATED"/>
    <property type="match status" value="1"/>
</dbReference>
<dbReference type="PANTHER" id="PTHR28259:SF1">
    <property type="entry name" value="FLUORIDE EXPORT PROTEIN 1-RELATED"/>
    <property type="match status" value="1"/>
</dbReference>
<dbReference type="Pfam" id="PF02537">
    <property type="entry name" value="CRCB"/>
    <property type="match status" value="1"/>
</dbReference>